<accession>D5EBS7</accession>
<evidence type="ECO:0000255" key="1">
    <source>
        <dbReference type="HAMAP-Rule" id="MF_02115"/>
    </source>
</evidence>
<feature type="chain" id="PRO_0000406263" description="FAD synthase">
    <location>
        <begin position="1"/>
        <end position="142"/>
    </location>
</feature>
<feature type="binding site" evidence="1">
    <location>
        <begin position="9"/>
        <end position="10"/>
    </location>
    <ligand>
        <name>ATP</name>
        <dbReference type="ChEBI" id="CHEBI:30616"/>
    </ligand>
</feature>
<feature type="binding site" evidence="1">
    <location>
        <begin position="14"/>
        <end position="17"/>
    </location>
    <ligand>
        <name>ATP</name>
        <dbReference type="ChEBI" id="CHEBI:30616"/>
    </ligand>
</feature>
<feature type="binding site" evidence="1">
    <location>
        <position position="92"/>
    </location>
    <ligand>
        <name>ATP</name>
        <dbReference type="ChEBI" id="CHEBI:30616"/>
    </ligand>
</feature>
<gene>
    <name evidence="1" type="primary">ribL</name>
    <name type="ordered locus">Mmah_1121</name>
</gene>
<proteinExistence type="inferred from homology"/>
<name>RIBL_METMS</name>
<protein>
    <recommendedName>
        <fullName evidence="1">FAD synthase</fullName>
        <ecNumber evidence="1">2.7.7.2</ecNumber>
    </recommendedName>
    <alternativeName>
        <fullName evidence="1">FMN adenylyltransferase</fullName>
    </alternativeName>
    <alternativeName>
        <fullName evidence="1">Flavin adenine dinucleotide synthase</fullName>
    </alternativeName>
</protein>
<dbReference type="EC" id="2.7.7.2" evidence="1"/>
<dbReference type="EMBL" id="CP001994">
    <property type="protein sequence ID" value="ADE36628.1"/>
    <property type="molecule type" value="Genomic_DNA"/>
</dbReference>
<dbReference type="RefSeq" id="WP_013037571.1">
    <property type="nucleotide sequence ID" value="NC_014002.1"/>
</dbReference>
<dbReference type="SMR" id="D5EBS7"/>
<dbReference type="STRING" id="547558.Mmah_1121"/>
<dbReference type="GeneID" id="8983288"/>
<dbReference type="KEGG" id="mmh:Mmah_1121"/>
<dbReference type="HOGENOM" id="CLU_034585_2_1_2"/>
<dbReference type="OrthoDB" id="1912at2157"/>
<dbReference type="UniPathway" id="UPA00277">
    <property type="reaction ID" value="UER00407"/>
</dbReference>
<dbReference type="Proteomes" id="UP000001059">
    <property type="component" value="Chromosome"/>
</dbReference>
<dbReference type="GO" id="GO:0005524">
    <property type="term" value="F:ATP binding"/>
    <property type="evidence" value="ECO:0007669"/>
    <property type="project" value="UniProtKB-UniRule"/>
</dbReference>
<dbReference type="GO" id="GO:0003919">
    <property type="term" value="F:FMN adenylyltransferase activity"/>
    <property type="evidence" value="ECO:0007669"/>
    <property type="project" value="UniProtKB-UniRule"/>
</dbReference>
<dbReference type="GO" id="GO:0006747">
    <property type="term" value="P:FAD biosynthetic process"/>
    <property type="evidence" value="ECO:0007669"/>
    <property type="project" value="UniProtKB-UniRule"/>
</dbReference>
<dbReference type="GO" id="GO:0046444">
    <property type="term" value="P:FMN metabolic process"/>
    <property type="evidence" value="ECO:0007669"/>
    <property type="project" value="UniProtKB-UniRule"/>
</dbReference>
<dbReference type="CDD" id="cd02170">
    <property type="entry name" value="cytidylyltransferase"/>
    <property type="match status" value="1"/>
</dbReference>
<dbReference type="Gene3D" id="3.40.50.620">
    <property type="entry name" value="HUPs"/>
    <property type="match status" value="1"/>
</dbReference>
<dbReference type="HAMAP" id="MF_02115">
    <property type="entry name" value="FAD_synth_arch"/>
    <property type="match status" value="1"/>
</dbReference>
<dbReference type="InterPro" id="IPR050385">
    <property type="entry name" value="Archaeal_FAD_synthase"/>
</dbReference>
<dbReference type="InterPro" id="IPR004821">
    <property type="entry name" value="Cyt_trans-like"/>
</dbReference>
<dbReference type="InterPro" id="IPR024902">
    <property type="entry name" value="FAD_synth_RibL"/>
</dbReference>
<dbReference type="InterPro" id="IPR014729">
    <property type="entry name" value="Rossmann-like_a/b/a_fold"/>
</dbReference>
<dbReference type="NCBIfam" id="TIGR00125">
    <property type="entry name" value="cyt_tran_rel"/>
    <property type="match status" value="1"/>
</dbReference>
<dbReference type="PANTHER" id="PTHR43793">
    <property type="entry name" value="FAD SYNTHASE"/>
    <property type="match status" value="1"/>
</dbReference>
<dbReference type="PANTHER" id="PTHR43793:SF1">
    <property type="entry name" value="FAD SYNTHASE"/>
    <property type="match status" value="1"/>
</dbReference>
<dbReference type="Pfam" id="PF01467">
    <property type="entry name" value="CTP_transf_like"/>
    <property type="match status" value="1"/>
</dbReference>
<dbReference type="SUPFAM" id="SSF52374">
    <property type="entry name" value="Nucleotidylyl transferase"/>
    <property type="match status" value="1"/>
</dbReference>
<organism>
    <name type="scientific">Methanohalophilus mahii (strain ATCC 35705 / DSM 5219 / SLP)</name>
    <dbReference type="NCBI Taxonomy" id="547558"/>
    <lineage>
        <taxon>Archaea</taxon>
        <taxon>Methanobacteriati</taxon>
        <taxon>Methanobacteriota</taxon>
        <taxon>Stenosarchaea group</taxon>
        <taxon>Methanomicrobia</taxon>
        <taxon>Methanosarcinales</taxon>
        <taxon>Methanosarcinaceae</taxon>
        <taxon>Methanohalophilus</taxon>
    </lineage>
</organism>
<comment type="function">
    <text evidence="1">Catalyzes the transfer of the AMP portion of ATP to flavin mononucleotide (FMN) to produce flavin adenine dinucleotide (FAD) coenzyme.</text>
</comment>
<comment type="catalytic activity">
    <reaction evidence="1">
        <text>FMN + ATP + H(+) = FAD + diphosphate</text>
        <dbReference type="Rhea" id="RHEA:17237"/>
        <dbReference type="ChEBI" id="CHEBI:15378"/>
        <dbReference type="ChEBI" id="CHEBI:30616"/>
        <dbReference type="ChEBI" id="CHEBI:33019"/>
        <dbReference type="ChEBI" id="CHEBI:57692"/>
        <dbReference type="ChEBI" id="CHEBI:58210"/>
        <dbReference type="EC" id="2.7.7.2"/>
    </reaction>
</comment>
<comment type="cofactor">
    <cofactor evidence="1">
        <name>a divalent metal cation</name>
        <dbReference type="ChEBI" id="CHEBI:60240"/>
    </cofactor>
</comment>
<comment type="pathway">
    <text evidence="1">Cofactor biosynthesis; FAD biosynthesis; FAD from FMN: step 1/1.</text>
</comment>
<comment type="subunit">
    <text evidence="1">Homodimer.</text>
</comment>
<comment type="similarity">
    <text evidence="1">Belongs to the archaeal FAD synthase family.</text>
</comment>
<reference key="1">
    <citation type="submission" date="2010-03" db="EMBL/GenBank/DDBJ databases">
        <title>The complete genome of Methanohalophilus mahii DSM 5219.</title>
        <authorList>
            <consortium name="US DOE Joint Genome Institute (JGI-PGF)"/>
            <person name="Lucas S."/>
            <person name="Copeland A."/>
            <person name="Lapidus A."/>
            <person name="Glavina del Rio T."/>
            <person name="Dalin E."/>
            <person name="Tice H."/>
            <person name="Bruce D."/>
            <person name="Goodwin L."/>
            <person name="Pitluck S."/>
            <person name="Kyrpides N."/>
            <person name="Mavromatis K."/>
            <person name="Ivanova N."/>
            <person name="Lykidis A."/>
            <person name="Saunders E."/>
            <person name="Brettin T."/>
            <person name="Detter J.C."/>
            <person name="Han C."/>
            <person name="Land M."/>
            <person name="Hauser L."/>
            <person name="Markowitz V."/>
            <person name="Cheng J.-F."/>
            <person name="Hugenholtz P."/>
            <person name="Woyke T."/>
            <person name="Wu D."/>
            <person name="Spring S."/>
            <person name="Schneider S."/>
            <person name="Schroeder M."/>
            <person name="Klenk H.-P."/>
            <person name="Eisen J.A."/>
        </authorList>
    </citation>
    <scope>NUCLEOTIDE SEQUENCE [LARGE SCALE GENOMIC DNA]</scope>
    <source>
        <strain>ATCC 35705 / DSM 5219 / SLP</strain>
    </source>
</reference>
<sequence>MTRILATGTFDILHPGHLYYLEQARKYGNELYVLVARDSTIEHKPKPIVPEKQRLEMVKALRVVDHALLGSEEDMFKPLKEVQPDIIVLGHDQVFDEKELEDKLQKRGFNTKVVRLGKPHQCTLCSSGRIIKRILERKRTEL</sequence>
<keyword id="KW-0067">ATP-binding</keyword>
<keyword id="KW-0274">FAD</keyword>
<keyword id="KW-0285">Flavoprotein</keyword>
<keyword id="KW-0288">FMN</keyword>
<keyword id="KW-0547">Nucleotide-binding</keyword>
<keyword id="KW-0548">Nucleotidyltransferase</keyword>
<keyword id="KW-1185">Reference proteome</keyword>
<keyword id="KW-0808">Transferase</keyword>